<reference key="1">
    <citation type="journal article" date="2015" name="Proc. Natl. Acad. Sci. U.S.A.">
        <title>Trichodesmium genome maintains abundant, widespread noncoding DNA in situ, despite oligotrophic lifestyle.</title>
        <authorList>
            <person name="Walworth N."/>
            <person name="Pfreundt U."/>
            <person name="Nelson W.C."/>
            <person name="Mincer T."/>
            <person name="Heidelberg J.F."/>
            <person name="Fu F."/>
            <person name="Waterbury J.B."/>
            <person name="Glavina del Rio T."/>
            <person name="Goodwin L."/>
            <person name="Kyrpides N.C."/>
            <person name="Land M.L."/>
            <person name="Woyke T."/>
            <person name="Hutchins D.A."/>
            <person name="Hess W.R."/>
            <person name="Webb E.A."/>
        </authorList>
    </citation>
    <scope>NUCLEOTIDE SEQUENCE [LARGE SCALE GENOMIC DNA]</scope>
    <source>
        <strain>IMS101</strain>
    </source>
</reference>
<sequence>MAIARRISRIASLIKQEISQMLLHGIKDNRVGIGMVSVTDVDVSGDLQHAKVFVSIYGSDEVRSQTMAGLRSATGYVRSELGKRIRMRRTPEVIFVEDRSLERGTEILSLLNKLSQERQQQEIEDITHKESHQDTIE</sequence>
<gene>
    <name evidence="1" type="primary">rbfA</name>
    <name type="ordered locus">Tery_2895</name>
</gene>
<protein>
    <recommendedName>
        <fullName evidence="1">Ribosome-binding factor A</fullName>
    </recommendedName>
</protein>
<accession>Q110L1</accession>
<organism>
    <name type="scientific">Trichodesmium erythraeum (strain IMS101)</name>
    <dbReference type="NCBI Taxonomy" id="203124"/>
    <lineage>
        <taxon>Bacteria</taxon>
        <taxon>Bacillati</taxon>
        <taxon>Cyanobacteriota</taxon>
        <taxon>Cyanophyceae</taxon>
        <taxon>Oscillatoriophycideae</taxon>
        <taxon>Oscillatoriales</taxon>
        <taxon>Microcoleaceae</taxon>
        <taxon>Trichodesmium</taxon>
    </lineage>
</organism>
<keyword id="KW-0963">Cytoplasm</keyword>
<keyword id="KW-0690">Ribosome biogenesis</keyword>
<evidence type="ECO:0000255" key="1">
    <source>
        <dbReference type="HAMAP-Rule" id="MF_00003"/>
    </source>
</evidence>
<feature type="chain" id="PRO_1000000243" description="Ribosome-binding factor A">
    <location>
        <begin position="1"/>
        <end position="137"/>
    </location>
</feature>
<name>RBFA_TRIEI</name>
<proteinExistence type="inferred from homology"/>
<dbReference type="EMBL" id="CP000393">
    <property type="protein sequence ID" value="ABG52063.1"/>
    <property type="molecule type" value="Genomic_DNA"/>
</dbReference>
<dbReference type="RefSeq" id="WP_011612422.1">
    <property type="nucleotide sequence ID" value="NC_008312.1"/>
</dbReference>
<dbReference type="SMR" id="Q110L1"/>
<dbReference type="STRING" id="203124.Tery_2895"/>
<dbReference type="KEGG" id="ter:Tery_2895"/>
<dbReference type="eggNOG" id="COG0858">
    <property type="taxonomic scope" value="Bacteria"/>
</dbReference>
<dbReference type="HOGENOM" id="CLU_089475_2_1_3"/>
<dbReference type="OrthoDB" id="307788at2"/>
<dbReference type="GO" id="GO:0005829">
    <property type="term" value="C:cytosol"/>
    <property type="evidence" value="ECO:0007669"/>
    <property type="project" value="TreeGrafter"/>
</dbReference>
<dbReference type="GO" id="GO:0043024">
    <property type="term" value="F:ribosomal small subunit binding"/>
    <property type="evidence" value="ECO:0007669"/>
    <property type="project" value="TreeGrafter"/>
</dbReference>
<dbReference type="GO" id="GO:0030490">
    <property type="term" value="P:maturation of SSU-rRNA"/>
    <property type="evidence" value="ECO:0007669"/>
    <property type="project" value="UniProtKB-UniRule"/>
</dbReference>
<dbReference type="Gene3D" id="3.30.300.20">
    <property type="match status" value="1"/>
</dbReference>
<dbReference type="HAMAP" id="MF_00003">
    <property type="entry name" value="RbfA"/>
    <property type="match status" value="1"/>
</dbReference>
<dbReference type="InterPro" id="IPR015946">
    <property type="entry name" value="KH_dom-like_a/b"/>
</dbReference>
<dbReference type="InterPro" id="IPR000238">
    <property type="entry name" value="RbfA"/>
</dbReference>
<dbReference type="InterPro" id="IPR023799">
    <property type="entry name" value="RbfA_dom_sf"/>
</dbReference>
<dbReference type="InterPro" id="IPR020053">
    <property type="entry name" value="Ribosome-bd_factorA_CS"/>
</dbReference>
<dbReference type="NCBIfam" id="TIGR00082">
    <property type="entry name" value="rbfA"/>
    <property type="match status" value="1"/>
</dbReference>
<dbReference type="PANTHER" id="PTHR33515">
    <property type="entry name" value="RIBOSOME-BINDING FACTOR A, CHLOROPLASTIC-RELATED"/>
    <property type="match status" value="1"/>
</dbReference>
<dbReference type="PANTHER" id="PTHR33515:SF1">
    <property type="entry name" value="RIBOSOME-BINDING FACTOR A, CHLOROPLASTIC-RELATED"/>
    <property type="match status" value="1"/>
</dbReference>
<dbReference type="Pfam" id="PF02033">
    <property type="entry name" value="RBFA"/>
    <property type="match status" value="1"/>
</dbReference>
<dbReference type="SUPFAM" id="SSF89919">
    <property type="entry name" value="Ribosome-binding factor A, RbfA"/>
    <property type="match status" value="1"/>
</dbReference>
<dbReference type="PROSITE" id="PS01319">
    <property type="entry name" value="RBFA"/>
    <property type="match status" value="1"/>
</dbReference>
<comment type="function">
    <text evidence="1">One of several proteins that assist in the late maturation steps of the functional core of the 30S ribosomal subunit. Associates with free 30S ribosomal subunits (but not with 30S subunits that are part of 70S ribosomes or polysomes). Required for efficient processing of 16S rRNA. May interact with the 5'-terminal helix region of 16S rRNA.</text>
</comment>
<comment type="subunit">
    <text evidence="1">Monomer. Binds 30S ribosomal subunits, but not 50S ribosomal subunits or 70S ribosomes.</text>
</comment>
<comment type="subcellular location">
    <subcellularLocation>
        <location evidence="1">Cytoplasm</location>
    </subcellularLocation>
</comment>
<comment type="similarity">
    <text evidence="1">Belongs to the RbfA family.</text>
</comment>